<sequence length="75" mass="8956">MARYFRRRKFCRFTAENVVEIDYKDIATLKNYITESGKIVPSRITGTRAKYQRQLARAIKRARYLALLPYTDNHQ</sequence>
<organism>
    <name type="scientific">Histophilus somni (strain 129Pt)</name>
    <name type="common">Haemophilus somnus</name>
    <dbReference type="NCBI Taxonomy" id="205914"/>
    <lineage>
        <taxon>Bacteria</taxon>
        <taxon>Pseudomonadati</taxon>
        <taxon>Pseudomonadota</taxon>
        <taxon>Gammaproteobacteria</taxon>
        <taxon>Pasteurellales</taxon>
        <taxon>Pasteurellaceae</taxon>
        <taxon>Histophilus</taxon>
    </lineage>
</organism>
<comment type="function">
    <text evidence="1">Binds as a heterodimer with protein bS6 to the central domain of the 16S rRNA, where it helps stabilize the platform of the 30S subunit.</text>
</comment>
<comment type="subunit">
    <text evidence="1">Part of the 30S ribosomal subunit. Forms a tight heterodimer with protein bS6.</text>
</comment>
<comment type="similarity">
    <text evidence="1">Belongs to the bacterial ribosomal protein bS18 family.</text>
</comment>
<reference key="1">
    <citation type="journal article" date="2007" name="J. Bacteriol.">
        <title>Complete genome sequence of Haemophilus somnus (Histophilus somni) strain 129Pt and comparison to Haemophilus ducreyi 35000HP and Haemophilus influenzae Rd.</title>
        <authorList>
            <person name="Challacombe J.F."/>
            <person name="Duncan A.J."/>
            <person name="Brettin T.S."/>
            <person name="Bruce D."/>
            <person name="Chertkov O."/>
            <person name="Detter J.C."/>
            <person name="Han C.S."/>
            <person name="Misra M."/>
            <person name="Richardson P."/>
            <person name="Tapia R."/>
            <person name="Thayer N."/>
            <person name="Xie G."/>
            <person name="Inzana T.J."/>
        </authorList>
    </citation>
    <scope>NUCLEOTIDE SEQUENCE [LARGE SCALE GENOMIC DNA]</scope>
    <source>
        <strain>129Pt</strain>
    </source>
</reference>
<gene>
    <name evidence="1" type="primary">rpsR</name>
    <name type="ordered locus">HS_1436</name>
</gene>
<protein>
    <recommendedName>
        <fullName evidence="1">Small ribosomal subunit protein bS18</fullName>
    </recommendedName>
    <alternativeName>
        <fullName evidence="2">30S ribosomal protein S18</fullName>
    </alternativeName>
</protein>
<accession>Q0I4E7</accession>
<evidence type="ECO:0000255" key="1">
    <source>
        <dbReference type="HAMAP-Rule" id="MF_00270"/>
    </source>
</evidence>
<evidence type="ECO:0000305" key="2"/>
<keyword id="KW-0687">Ribonucleoprotein</keyword>
<keyword id="KW-0689">Ribosomal protein</keyword>
<keyword id="KW-0694">RNA-binding</keyword>
<keyword id="KW-0699">rRNA-binding</keyword>
<dbReference type="EMBL" id="CP000436">
    <property type="protein sequence ID" value="ABI25711.1"/>
    <property type="molecule type" value="Genomic_DNA"/>
</dbReference>
<dbReference type="SMR" id="Q0I4E7"/>
<dbReference type="KEGG" id="hso:HS_1436"/>
<dbReference type="eggNOG" id="COG0238">
    <property type="taxonomic scope" value="Bacteria"/>
</dbReference>
<dbReference type="HOGENOM" id="CLU_148710_2_2_6"/>
<dbReference type="GO" id="GO:0022627">
    <property type="term" value="C:cytosolic small ribosomal subunit"/>
    <property type="evidence" value="ECO:0007669"/>
    <property type="project" value="TreeGrafter"/>
</dbReference>
<dbReference type="GO" id="GO:0070181">
    <property type="term" value="F:small ribosomal subunit rRNA binding"/>
    <property type="evidence" value="ECO:0007669"/>
    <property type="project" value="TreeGrafter"/>
</dbReference>
<dbReference type="GO" id="GO:0003735">
    <property type="term" value="F:structural constituent of ribosome"/>
    <property type="evidence" value="ECO:0007669"/>
    <property type="project" value="InterPro"/>
</dbReference>
<dbReference type="GO" id="GO:0006412">
    <property type="term" value="P:translation"/>
    <property type="evidence" value="ECO:0007669"/>
    <property type="project" value="UniProtKB-UniRule"/>
</dbReference>
<dbReference type="FunFam" id="4.10.640.10:FF:000001">
    <property type="entry name" value="30S ribosomal protein S18"/>
    <property type="match status" value="1"/>
</dbReference>
<dbReference type="Gene3D" id="4.10.640.10">
    <property type="entry name" value="Ribosomal protein S18"/>
    <property type="match status" value="1"/>
</dbReference>
<dbReference type="HAMAP" id="MF_00270">
    <property type="entry name" value="Ribosomal_bS18"/>
    <property type="match status" value="1"/>
</dbReference>
<dbReference type="InterPro" id="IPR001648">
    <property type="entry name" value="Ribosomal_bS18"/>
</dbReference>
<dbReference type="InterPro" id="IPR018275">
    <property type="entry name" value="Ribosomal_bS18_CS"/>
</dbReference>
<dbReference type="InterPro" id="IPR036870">
    <property type="entry name" value="Ribosomal_bS18_sf"/>
</dbReference>
<dbReference type="NCBIfam" id="TIGR00165">
    <property type="entry name" value="S18"/>
    <property type="match status" value="1"/>
</dbReference>
<dbReference type="PANTHER" id="PTHR13479">
    <property type="entry name" value="30S RIBOSOMAL PROTEIN S18"/>
    <property type="match status" value="1"/>
</dbReference>
<dbReference type="PANTHER" id="PTHR13479:SF40">
    <property type="entry name" value="SMALL RIBOSOMAL SUBUNIT PROTEIN BS18M"/>
    <property type="match status" value="1"/>
</dbReference>
<dbReference type="Pfam" id="PF01084">
    <property type="entry name" value="Ribosomal_S18"/>
    <property type="match status" value="1"/>
</dbReference>
<dbReference type="PRINTS" id="PR00974">
    <property type="entry name" value="RIBOSOMALS18"/>
</dbReference>
<dbReference type="SUPFAM" id="SSF46911">
    <property type="entry name" value="Ribosomal protein S18"/>
    <property type="match status" value="1"/>
</dbReference>
<dbReference type="PROSITE" id="PS00057">
    <property type="entry name" value="RIBOSOMAL_S18"/>
    <property type="match status" value="1"/>
</dbReference>
<feature type="chain" id="PRO_1000003505" description="Small ribosomal subunit protein bS18">
    <location>
        <begin position="1"/>
        <end position="75"/>
    </location>
</feature>
<proteinExistence type="inferred from homology"/>
<name>RS18_HISS1</name>